<reference key="1">
    <citation type="journal article" date="2009" name="Proc. Natl. Acad. Sci. U.S.A.">
        <title>The genomic basis of trophic strategy in marine bacteria.</title>
        <authorList>
            <person name="Lauro F.M."/>
            <person name="McDougald D."/>
            <person name="Thomas T."/>
            <person name="Williams T.J."/>
            <person name="Egan S."/>
            <person name="Rice S."/>
            <person name="DeMaere M.Z."/>
            <person name="Ting L."/>
            <person name="Ertan H."/>
            <person name="Johnson J."/>
            <person name="Ferriera S."/>
            <person name="Lapidus A."/>
            <person name="Anderson I."/>
            <person name="Kyrpides N."/>
            <person name="Munk A.C."/>
            <person name="Detter C."/>
            <person name="Han C.S."/>
            <person name="Brown M.V."/>
            <person name="Robb F.T."/>
            <person name="Kjelleberg S."/>
            <person name="Cavicchioli R."/>
        </authorList>
    </citation>
    <scope>NUCLEOTIDE SEQUENCE [LARGE SCALE GENOMIC DNA]</scope>
    <source>
        <strain>DSM 13593 / LMG 18877 / RB2256</strain>
    </source>
</reference>
<protein>
    <recommendedName>
        <fullName evidence="1">PKHD-type hydroxylase Sala_1910</fullName>
        <ecNumber evidence="1">1.14.11.-</ecNumber>
    </recommendedName>
</protein>
<dbReference type="EC" id="1.14.11.-" evidence="1"/>
<dbReference type="EMBL" id="CP000356">
    <property type="protein sequence ID" value="ABF53622.1"/>
    <property type="molecule type" value="Genomic_DNA"/>
</dbReference>
<dbReference type="RefSeq" id="WP_011542199.1">
    <property type="nucleotide sequence ID" value="NC_008048.1"/>
</dbReference>
<dbReference type="SMR" id="Q1GRV0"/>
<dbReference type="STRING" id="317655.Sala_1910"/>
<dbReference type="KEGG" id="sal:Sala_1910"/>
<dbReference type="eggNOG" id="COG3128">
    <property type="taxonomic scope" value="Bacteria"/>
</dbReference>
<dbReference type="HOGENOM" id="CLU_106663_0_0_5"/>
<dbReference type="OrthoDB" id="9812472at2"/>
<dbReference type="Proteomes" id="UP000006578">
    <property type="component" value="Chromosome"/>
</dbReference>
<dbReference type="GO" id="GO:0016706">
    <property type="term" value="F:2-oxoglutarate-dependent dioxygenase activity"/>
    <property type="evidence" value="ECO:0007669"/>
    <property type="project" value="UniProtKB-UniRule"/>
</dbReference>
<dbReference type="GO" id="GO:0005506">
    <property type="term" value="F:iron ion binding"/>
    <property type="evidence" value="ECO:0007669"/>
    <property type="project" value="UniProtKB-UniRule"/>
</dbReference>
<dbReference type="GO" id="GO:0031418">
    <property type="term" value="F:L-ascorbic acid binding"/>
    <property type="evidence" value="ECO:0007669"/>
    <property type="project" value="UniProtKB-KW"/>
</dbReference>
<dbReference type="GO" id="GO:0006974">
    <property type="term" value="P:DNA damage response"/>
    <property type="evidence" value="ECO:0007669"/>
    <property type="project" value="TreeGrafter"/>
</dbReference>
<dbReference type="GO" id="GO:0006879">
    <property type="term" value="P:intracellular iron ion homeostasis"/>
    <property type="evidence" value="ECO:0007669"/>
    <property type="project" value="TreeGrafter"/>
</dbReference>
<dbReference type="Gene3D" id="2.60.120.620">
    <property type="entry name" value="q2cbj1_9rhob like domain"/>
    <property type="match status" value="1"/>
</dbReference>
<dbReference type="HAMAP" id="MF_00657">
    <property type="entry name" value="Hydroxyl_YbiX"/>
    <property type="match status" value="1"/>
</dbReference>
<dbReference type="InterPro" id="IPR005123">
    <property type="entry name" value="Oxoglu/Fe-dep_dioxygenase_dom"/>
</dbReference>
<dbReference type="InterPro" id="IPR023550">
    <property type="entry name" value="PKHD_hydroxylase"/>
</dbReference>
<dbReference type="InterPro" id="IPR006620">
    <property type="entry name" value="Pro_4_hyd_alph"/>
</dbReference>
<dbReference type="InterPro" id="IPR044862">
    <property type="entry name" value="Pro_4_hyd_alph_FE2OG_OXY"/>
</dbReference>
<dbReference type="NCBIfam" id="NF003974">
    <property type="entry name" value="PRK05467.1-3"/>
    <property type="match status" value="1"/>
</dbReference>
<dbReference type="PANTHER" id="PTHR41536">
    <property type="entry name" value="PKHD-TYPE HYDROXYLASE YBIX"/>
    <property type="match status" value="1"/>
</dbReference>
<dbReference type="PANTHER" id="PTHR41536:SF1">
    <property type="entry name" value="PKHD-TYPE HYDROXYLASE YBIX"/>
    <property type="match status" value="1"/>
</dbReference>
<dbReference type="Pfam" id="PF13640">
    <property type="entry name" value="2OG-FeII_Oxy_3"/>
    <property type="match status" value="1"/>
</dbReference>
<dbReference type="SMART" id="SM00702">
    <property type="entry name" value="P4Hc"/>
    <property type="match status" value="1"/>
</dbReference>
<dbReference type="PROSITE" id="PS51471">
    <property type="entry name" value="FE2OG_OXY"/>
    <property type="match status" value="1"/>
</dbReference>
<accession>Q1GRV0</accession>
<keyword id="KW-0223">Dioxygenase</keyword>
<keyword id="KW-0408">Iron</keyword>
<keyword id="KW-0479">Metal-binding</keyword>
<keyword id="KW-0560">Oxidoreductase</keyword>
<keyword id="KW-1185">Reference proteome</keyword>
<keyword id="KW-0847">Vitamin C</keyword>
<feature type="chain" id="PRO_0000346523" description="PKHD-type hydroxylase Sala_1910">
    <location>
        <begin position="1"/>
        <end position="218"/>
    </location>
</feature>
<feature type="domain" description="Fe2OG dioxygenase" evidence="1">
    <location>
        <begin position="74"/>
        <end position="172"/>
    </location>
</feature>
<feature type="binding site" evidence="1">
    <location>
        <position position="92"/>
    </location>
    <ligand>
        <name>Fe cation</name>
        <dbReference type="ChEBI" id="CHEBI:24875"/>
    </ligand>
</feature>
<feature type="binding site" evidence="1">
    <location>
        <position position="94"/>
    </location>
    <ligand>
        <name>Fe cation</name>
        <dbReference type="ChEBI" id="CHEBI:24875"/>
    </ligand>
</feature>
<feature type="binding site" evidence="1">
    <location>
        <position position="153"/>
    </location>
    <ligand>
        <name>Fe cation</name>
        <dbReference type="ChEBI" id="CHEBI:24875"/>
    </ligand>
</feature>
<feature type="binding site" evidence="1">
    <location>
        <position position="163"/>
    </location>
    <ligand>
        <name>2-oxoglutarate</name>
        <dbReference type="ChEBI" id="CHEBI:16810"/>
    </ligand>
</feature>
<comment type="cofactor">
    <cofactor evidence="1">
        <name>Fe(2+)</name>
        <dbReference type="ChEBI" id="CHEBI:29033"/>
    </cofactor>
    <text evidence="1">Binds 1 Fe(2+) ion per subunit.</text>
</comment>
<comment type="cofactor">
    <cofactor evidence="1">
        <name>L-ascorbate</name>
        <dbReference type="ChEBI" id="CHEBI:38290"/>
    </cofactor>
</comment>
<name>Y1910_SPHAL</name>
<gene>
    <name type="ordered locus">Sala_1910</name>
</gene>
<evidence type="ECO:0000255" key="1">
    <source>
        <dbReference type="HAMAP-Rule" id="MF_00657"/>
    </source>
</evidence>
<proteinExistence type="inferred from homology"/>
<sequence>MFKLVQLLGDNAVRALRDIAASGTFVDGKISNPHSRVKNNLQLHDAAAYERSSKILLDAMIQNADFMEFSFPARIAPPLLTRYTPGMHYGLHPDAAYIPLPDGQLRTDVSCTIFLSDPADYDGGALHVQLGNADLRFKEAPGVAIVYPSHTLHEVEPVTRGERLVAITFIQSLIPDVQQRNLMHELNEIAALEGGKMEPANYTRLQAVQYQLLRMWRR</sequence>
<organism>
    <name type="scientific">Sphingopyxis alaskensis (strain DSM 13593 / LMG 18877 / RB2256)</name>
    <name type="common">Sphingomonas alaskensis</name>
    <dbReference type="NCBI Taxonomy" id="317655"/>
    <lineage>
        <taxon>Bacteria</taxon>
        <taxon>Pseudomonadati</taxon>
        <taxon>Pseudomonadota</taxon>
        <taxon>Alphaproteobacteria</taxon>
        <taxon>Sphingomonadales</taxon>
        <taxon>Sphingomonadaceae</taxon>
        <taxon>Sphingopyxis</taxon>
    </lineage>
</organism>